<sequence>MSYDRVKDFDLPELAVHLQPHGAVMIDRKSMFYFRLSGRGAQLAFLLSKNKNLHKTARIWEIMKKEEMSADQLKEELSAHPFTEAWTEGLLDQPLHVSGSLDSYLPISCTLQLTNACNLSCSFCYASSGKPYPEELSSEQWILVMQKLAAHGVADITLTGGEAKLIKGFKELVVVASSLFTNVNVFSNGLNWRDEEVELLSHLGNVSVQISIDGMDNTHDQLRGRKGGFKESMNTIKKLSEANIPVIVAMTINESNADEVSDVVEQCANAGAFIFRAGKTLSVGRATEGFKALDIDFEEMVQIQLREARHKWGDRLNIIDWEHEESSFTTDFCTPGYLAWYIRADGYVTPCQLEDLPLGHILEDSMADIGSPARLLQLKCEAKNCKCIGKIELSEPDLPFQKEVKAGIQE</sequence>
<accession>O31423</accession>
<accession>O31424</accession>
<accession>O87096</accession>
<accession>O87097</accession>
<dbReference type="EC" id="1.21.98.-" evidence="7"/>
<dbReference type="EMBL" id="AB006424">
    <property type="protein sequence ID" value="BAA33087.1"/>
    <property type="status" value="ALT_FRAME"/>
    <property type="molecule type" value="Genomic_DNA"/>
</dbReference>
<dbReference type="EMBL" id="AB006424">
    <property type="protein sequence ID" value="BAA33088.1"/>
    <property type="status" value="ALT_FRAME"/>
    <property type="molecule type" value="Genomic_DNA"/>
</dbReference>
<dbReference type="EMBL" id="AB006424">
    <property type="protein sequence ID" value="BAA33089.1"/>
    <property type="status" value="ALT_FRAME"/>
    <property type="molecule type" value="Genomic_DNA"/>
</dbReference>
<dbReference type="EMBL" id="AL009126">
    <property type="protein sequence ID" value="CAB11985.2"/>
    <property type="molecule type" value="Genomic_DNA"/>
</dbReference>
<dbReference type="PIR" id="D69746">
    <property type="entry name" value="D69746"/>
</dbReference>
<dbReference type="PIR" id="E69746">
    <property type="entry name" value="E69746"/>
</dbReference>
<dbReference type="RefSeq" id="NP_388073.2">
    <property type="nucleotide sequence ID" value="NC_000964.3"/>
</dbReference>
<dbReference type="RefSeq" id="WP_003234902.1">
    <property type="nucleotide sequence ID" value="NZ_OZ025638.1"/>
</dbReference>
<dbReference type="PDB" id="6EFN">
    <property type="method" value="X-ray"/>
    <property type="resolution" value="1.29 A"/>
    <property type="chains" value="A=1-410"/>
</dbReference>
<dbReference type="PDBsum" id="6EFN"/>
<dbReference type="SMR" id="O31423"/>
<dbReference type="FunCoup" id="O31423">
    <property type="interactions" value="51"/>
</dbReference>
<dbReference type="STRING" id="224308.BSU01920"/>
<dbReference type="PaxDb" id="224308-BSU01920"/>
<dbReference type="DNASU" id="938501"/>
<dbReference type="EnsemblBacteria" id="CAB11985">
    <property type="protein sequence ID" value="CAB11985"/>
    <property type="gene ID" value="BSU_01920"/>
</dbReference>
<dbReference type="GeneID" id="938501"/>
<dbReference type="KEGG" id="bsu:BSU01920"/>
<dbReference type="PATRIC" id="fig|224308.179.peg.199"/>
<dbReference type="eggNOG" id="COG0535">
    <property type="taxonomic scope" value="Bacteria"/>
</dbReference>
<dbReference type="InParanoid" id="O31423"/>
<dbReference type="OrthoDB" id="9808591at2"/>
<dbReference type="PhylomeDB" id="O31423"/>
<dbReference type="BioCyc" id="BSUB:BSU01920-MONOMER"/>
<dbReference type="Proteomes" id="UP000001570">
    <property type="component" value="Chromosome"/>
</dbReference>
<dbReference type="GO" id="GO:0005737">
    <property type="term" value="C:cytoplasm"/>
    <property type="evidence" value="ECO:0007669"/>
    <property type="project" value="UniProtKB-SubCell"/>
</dbReference>
<dbReference type="GO" id="GO:0051539">
    <property type="term" value="F:4 iron, 4 sulfur cluster binding"/>
    <property type="evidence" value="ECO:0007669"/>
    <property type="project" value="UniProtKB-KW"/>
</dbReference>
<dbReference type="GO" id="GO:0046872">
    <property type="term" value="F:metal ion binding"/>
    <property type="evidence" value="ECO:0007669"/>
    <property type="project" value="UniProtKB-KW"/>
</dbReference>
<dbReference type="GO" id="GO:0016491">
    <property type="term" value="F:oxidoreductase activity"/>
    <property type="evidence" value="ECO:0007669"/>
    <property type="project" value="UniProtKB-KW"/>
</dbReference>
<dbReference type="GO" id="GO:0030152">
    <property type="term" value="P:bacteriocin biosynthetic process"/>
    <property type="evidence" value="ECO:0007669"/>
    <property type="project" value="UniProtKB-KW"/>
</dbReference>
<dbReference type="CDD" id="cd01335">
    <property type="entry name" value="Radical_SAM"/>
    <property type="match status" value="1"/>
</dbReference>
<dbReference type="CDD" id="cd21109">
    <property type="entry name" value="SPASM"/>
    <property type="match status" value="1"/>
</dbReference>
<dbReference type="Gene3D" id="3.20.20.70">
    <property type="entry name" value="Aldolase class I"/>
    <property type="match status" value="1"/>
</dbReference>
<dbReference type="InterPro" id="IPR023885">
    <property type="entry name" value="4Fe4S-binding_SPASM_dom"/>
</dbReference>
<dbReference type="InterPro" id="IPR013785">
    <property type="entry name" value="Aldolase_TIM"/>
</dbReference>
<dbReference type="InterPro" id="IPR006638">
    <property type="entry name" value="Elp3/MiaA/NifB-like_rSAM"/>
</dbReference>
<dbReference type="InterPro" id="IPR000385">
    <property type="entry name" value="MoaA_NifB_PqqE_Fe-S-bd_CS"/>
</dbReference>
<dbReference type="InterPro" id="IPR050377">
    <property type="entry name" value="Radical_SAM_PqqE_MftC-like"/>
</dbReference>
<dbReference type="InterPro" id="IPR007197">
    <property type="entry name" value="rSAM"/>
</dbReference>
<dbReference type="InterPro" id="IPR030915">
    <property type="entry name" value="rSAM_SkfB"/>
</dbReference>
<dbReference type="NCBIfam" id="TIGR04403">
    <property type="entry name" value="rSAM_skfB"/>
    <property type="match status" value="1"/>
</dbReference>
<dbReference type="PANTHER" id="PTHR11228:SF7">
    <property type="entry name" value="PQQA PEPTIDE CYCLASE"/>
    <property type="match status" value="1"/>
</dbReference>
<dbReference type="PANTHER" id="PTHR11228">
    <property type="entry name" value="RADICAL SAM DOMAIN PROTEIN"/>
    <property type="match status" value="1"/>
</dbReference>
<dbReference type="Pfam" id="PF04055">
    <property type="entry name" value="Radical_SAM"/>
    <property type="match status" value="1"/>
</dbReference>
<dbReference type="Pfam" id="PF13186">
    <property type="entry name" value="SPASM"/>
    <property type="match status" value="1"/>
</dbReference>
<dbReference type="SFLD" id="SFLDG01072">
    <property type="entry name" value="dehydrogenase_like"/>
    <property type="match status" value="1"/>
</dbReference>
<dbReference type="SFLD" id="SFLDF00515">
    <property type="entry name" value="sporulation_killing_factor_pro"/>
    <property type="match status" value="1"/>
</dbReference>
<dbReference type="SMART" id="SM00729">
    <property type="entry name" value="Elp3"/>
    <property type="match status" value="1"/>
</dbReference>
<dbReference type="SUPFAM" id="SSF102114">
    <property type="entry name" value="Radical SAM enzymes"/>
    <property type="match status" value="1"/>
</dbReference>
<dbReference type="PROSITE" id="PS01305">
    <property type="entry name" value="MOAA_NIFB_PQQE"/>
    <property type="match status" value="1"/>
</dbReference>
<dbReference type="PROSITE" id="PS51918">
    <property type="entry name" value="RADICAL_SAM"/>
    <property type="match status" value="1"/>
</dbReference>
<keyword id="KW-0002">3D-structure</keyword>
<keyword id="KW-0004">4Fe-4S</keyword>
<keyword id="KW-0045">Antibiotic biosynthesis</keyword>
<keyword id="KW-0871">Bacteriocin biosynthesis</keyword>
<keyword id="KW-0963">Cytoplasm</keyword>
<keyword id="KW-0408">Iron</keyword>
<keyword id="KW-0411">Iron-sulfur</keyword>
<keyword id="KW-0479">Metal-binding</keyword>
<keyword id="KW-0560">Oxidoreductase</keyword>
<keyword id="KW-1185">Reference proteome</keyword>
<keyword id="KW-0949">S-adenosyl-L-methionine</keyword>
<gene>
    <name evidence="5" type="primary">skfB</name>
    <name type="synonym">ybcP</name>
    <name type="synonym">ybcQ</name>
    <name type="ordered locus">BSU01920</name>
</gene>
<feature type="chain" id="PRO_0000153049" description="Sporulation killing factor maturation protein SkfB">
    <location>
        <begin position="1"/>
        <end position="410"/>
    </location>
</feature>
<feature type="domain" description="Radical SAM core" evidence="1">
    <location>
        <begin position="103"/>
        <end position="314"/>
    </location>
</feature>
<feature type="binding site" evidence="7">
    <location>
        <position position="117"/>
    </location>
    <ligand>
        <name>[4Fe-4S] cluster</name>
        <dbReference type="ChEBI" id="CHEBI:49883"/>
        <label>1</label>
        <note>4Fe-4S-S-AdoMet</note>
    </ligand>
</feature>
<feature type="binding site" evidence="7">
    <location>
        <position position="121"/>
    </location>
    <ligand>
        <name>[4Fe-4S] cluster</name>
        <dbReference type="ChEBI" id="CHEBI:49883"/>
        <label>1</label>
        <note>4Fe-4S-S-AdoMet</note>
    </ligand>
</feature>
<feature type="binding site" evidence="7">
    <location>
        <position position="124"/>
    </location>
    <ligand>
        <name>[4Fe-4S] cluster</name>
        <dbReference type="ChEBI" id="CHEBI:49883"/>
        <label>1</label>
        <note>4Fe-4S-S-AdoMet</note>
    </ligand>
</feature>
<feature type="binding site" evidence="7">
    <location>
        <position position="380"/>
    </location>
    <ligand>
        <name>[4Fe-4S] cluster</name>
        <dbReference type="ChEBI" id="CHEBI:49883"/>
        <label>2</label>
        <note>4Fe-4S-S-substrate</note>
    </ligand>
</feature>
<feature type="binding site" evidence="7">
    <location>
        <position position="385"/>
    </location>
    <ligand>
        <name>[4Fe-4S] cluster</name>
        <dbReference type="ChEBI" id="CHEBI:49883"/>
        <label>2</label>
        <note>4Fe-4S-S-substrate</note>
    </ligand>
</feature>
<feature type="binding site" evidence="7">
    <location>
        <position position="387"/>
    </location>
    <ligand>
        <name>[4Fe-4S] cluster</name>
        <dbReference type="ChEBI" id="CHEBI:49883"/>
        <label>2</label>
        <note>4Fe-4S-S-substrate</note>
    </ligand>
</feature>
<feature type="mutagenesis site" description="No longer cleaves SAM, contains 55% iron of wild-type." evidence="4">
    <original>CNLSCSFC</original>
    <variation>ANLSASFA</variation>
    <location>
        <begin position="117"/>
        <end position="124"/>
    </location>
</feature>
<feature type="mutagenesis site" description="Cleaves SAM, but does not form thioether bond, contains 52% iron of wild-type." evidence="4">
    <original>CEAKNCKC</original>
    <variation>AEAKNAKA</variation>
    <location>
        <begin position="380"/>
        <end position="387"/>
    </location>
</feature>
<feature type="strand" evidence="8">
    <location>
        <begin position="14"/>
        <end position="19"/>
    </location>
</feature>
<feature type="strand" evidence="8">
    <location>
        <begin position="22"/>
        <end position="27"/>
    </location>
</feature>
<feature type="turn" evidence="8">
    <location>
        <begin position="28"/>
        <end position="30"/>
    </location>
</feature>
<feature type="strand" evidence="8">
    <location>
        <begin position="33"/>
        <end position="36"/>
    </location>
</feature>
<feature type="helix" evidence="8">
    <location>
        <begin position="38"/>
        <end position="50"/>
    </location>
</feature>
<feature type="helix" evidence="8">
    <location>
        <begin position="53"/>
        <end position="64"/>
    </location>
</feature>
<feature type="helix" evidence="8">
    <location>
        <begin position="70"/>
        <end position="77"/>
    </location>
</feature>
<feature type="helix" evidence="8">
    <location>
        <begin position="81"/>
        <end position="85"/>
    </location>
</feature>
<feature type="turn" evidence="8">
    <location>
        <begin position="86"/>
        <end position="91"/>
    </location>
</feature>
<feature type="strand" evidence="8">
    <location>
        <begin position="96"/>
        <end position="99"/>
    </location>
</feature>
<feature type="strand" evidence="8">
    <location>
        <begin position="101"/>
        <end position="103"/>
    </location>
</feature>
<feature type="strand" evidence="8">
    <location>
        <begin position="107"/>
        <end position="112"/>
    </location>
</feature>
<feature type="helix" evidence="8">
    <location>
        <begin position="138"/>
        <end position="150"/>
    </location>
</feature>
<feature type="strand" evidence="8">
    <location>
        <begin position="155"/>
        <end position="162"/>
    </location>
</feature>
<feature type="helix" evidence="8">
    <location>
        <begin position="163"/>
        <end position="165"/>
    </location>
</feature>
<feature type="helix" evidence="8">
    <location>
        <begin position="169"/>
        <end position="179"/>
    </location>
</feature>
<feature type="strand" evidence="8">
    <location>
        <begin position="180"/>
        <end position="187"/>
    </location>
</feature>
<feature type="helix" evidence="8">
    <location>
        <begin position="194"/>
        <end position="203"/>
    </location>
</feature>
<feature type="strand" evidence="8">
    <location>
        <begin position="205"/>
        <end position="211"/>
    </location>
</feature>
<feature type="helix" evidence="8">
    <location>
        <begin position="216"/>
        <end position="223"/>
    </location>
</feature>
<feature type="helix" evidence="8">
    <location>
        <begin position="228"/>
        <end position="241"/>
    </location>
</feature>
<feature type="strand" evidence="8">
    <location>
        <begin position="246"/>
        <end position="252"/>
    </location>
</feature>
<feature type="turn" evidence="8">
    <location>
        <begin position="254"/>
        <end position="256"/>
    </location>
</feature>
<feature type="helix" evidence="8">
    <location>
        <begin position="257"/>
        <end position="259"/>
    </location>
</feature>
<feature type="helix" evidence="8">
    <location>
        <begin position="260"/>
        <end position="270"/>
    </location>
</feature>
<feature type="strand" evidence="8">
    <location>
        <begin position="273"/>
        <end position="279"/>
    </location>
</feature>
<feature type="helix" evidence="8">
    <location>
        <begin position="284"/>
        <end position="287"/>
    </location>
</feature>
<feature type="helix" evidence="8">
    <location>
        <begin position="295"/>
        <end position="312"/>
    </location>
</feature>
<feature type="turn" evidence="8">
    <location>
        <begin position="313"/>
        <end position="315"/>
    </location>
</feature>
<feature type="strand" evidence="8">
    <location>
        <begin position="316"/>
        <end position="318"/>
    </location>
</feature>
<feature type="turn" evidence="8">
    <location>
        <begin position="336"/>
        <end position="338"/>
    </location>
</feature>
<feature type="strand" evidence="8">
    <location>
        <begin position="339"/>
        <end position="342"/>
    </location>
</feature>
<feature type="strand" evidence="8">
    <location>
        <begin position="346"/>
        <end position="351"/>
    </location>
</feature>
<feature type="strand" evidence="8">
    <location>
        <begin position="358"/>
        <end position="360"/>
    </location>
</feature>
<feature type="turn" evidence="8">
    <location>
        <begin position="361"/>
        <end position="363"/>
    </location>
</feature>
<feature type="helix" evidence="8">
    <location>
        <begin position="366"/>
        <end position="369"/>
    </location>
</feature>
<feature type="helix" evidence="8">
    <location>
        <begin position="372"/>
        <end position="381"/>
    </location>
</feature>
<feature type="helix" evidence="8">
    <location>
        <begin position="388"/>
        <end position="390"/>
    </location>
</feature>
<evidence type="ECO:0000255" key="1">
    <source>
        <dbReference type="PROSITE-ProRule" id="PRU01266"/>
    </source>
</evidence>
<evidence type="ECO:0000269" key="2">
    <source>
    </source>
</evidence>
<evidence type="ECO:0000269" key="3">
    <source>
    </source>
</evidence>
<evidence type="ECO:0000269" key="4">
    <source>
    </source>
</evidence>
<evidence type="ECO:0000303" key="5">
    <source>
    </source>
</evidence>
<evidence type="ECO:0000305" key="6"/>
<evidence type="ECO:0000305" key="7">
    <source>
    </source>
</evidence>
<evidence type="ECO:0007829" key="8">
    <source>
        <dbReference type="PDB" id="6EFN"/>
    </source>
</evidence>
<comment type="function">
    <text evidence="2 4">Catalyzes the formation of the thioether bond required for production of the sporulation killing factor (SKF) from SkfA (PubMed:12817086). Forms the cysteine-methionine thioether bond found in SKF; the acceptor amino acid can be hydrophobic, aromatic or a small hydrophilic amino acid but not a larger hydrophilic amino acid, i.e. Met=Ala, Phe, Leu, Tyr&gt;Asn, Ser&gt;&gt;Gln, Glu, Lys (PubMed:23282011). The relative position of Cys and Met in the substrate cannot be inverted, in vitro the thioether bond cannot be made in the absence of the SkfA propeptide, suggesting this is the first reaction in SKF maturation (PubMed:23282011). In vitro, in the absence of a second substrate, cleaves S-adenosyl-L-methionine into Met and 5'-dA (PubMed:23282011).</text>
</comment>
<comment type="cofactor">
    <cofactor evidence="4">
        <name>[4Fe-4S] cluster</name>
        <dbReference type="ChEBI" id="CHEBI:49883"/>
    </cofactor>
    <text evidence="4 7">Binds 2 [4Fe-4S] clusters. One cluster is coordinated with 3 cysteines and an exchangeable S-adenosyl-L-methionine (PubMed:23282011). The other is coordinated via 3 cysteines and maybe direct contact with the SkfA precursor (Probable).</text>
</comment>
<comment type="subcellular location">
    <subcellularLocation>
        <location evidence="7">Cytoplasm</location>
    </subcellularLocation>
</comment>
<comment type="induction">
    <text evidence="2 3">By Spo0A (PubMed:12817086) and PhoP, during nutrient starvation, especially phosphate starvation. Repressed by AbrB during normal growth when nutrients are plentiful, in association with the transcriptional repressor Abh.</text>
</comment>
<comment type="disruption phenotype">
    <text evidence="2">When the skfA-skfB-skfC-skfE-skfF-skfG-skfH operon is deleted, increased rate of spore formation; a double operon deletion (sdpA-sdpC plus skfA-skfH) makes spores even faster (PubMed:12817086).</text>
</comment>
<comment type="miscellaneous">
    <text evidence="2">Accelerated cannibalism by skf- cells is seen on solid media but not in liquid media.</text>
</comment>
<comment type="similarity">
    <text evidence="6">Belongs to the radical SAM superfamily.</text>
</comment>
<comment type="sequence caution" evidence="6">
    <conflict type="frameshift">
        <sequence resource="EMBL-CDS" id="BAA33089"/>
    </conflict>
</comment>
<proteinExistence type="evidence at protein level"/>
<reference key="1">
    <citation type="submission" date="1997-07" db="EMBL/GenBank/DDBJ databases">
        <title>Sequence analysis of the 70kb region between 17 and 23 degree of the Bacillus subtilis chromosome.</title>
        <authorList>
            <person name="Haga K."/>
            <person name="Liu H."/>
            <person name="Yasumoto K."/>
            <person name="Takahashi H."/>
            <person name="Yoshikawa H."/>
        </authorList>
    </citation>
    <scope>NUCLEOTIDE SEQUENCE [GENOMIC DNA]</scope>
    <source>
        <strain>168</strain>
    </source>
</reference>
<reference key="2">
    <citation type="journal article" date="1997" name="Nature">
        <title>The complete genome sequence of the Gram-positive bacterium Bacillus subtilis.</title>
        <authorList>
            <person name="Kunst F."/>
            <person name="Ogasawara N."/>
            <person name="Moszer I."/>
            <person name="Albertini A.M."/>
            <person name="Alloni G."/>
            <person name="Azevedo V."/>
            <person name="Bertero M.G."/>
            <person name="Bessieres P."/>
            <person name="Bolotin A."/>
            <person name="Borchert S."/>
            <person name="Borriss R."/>
            <person name="Boursier L."/>
            <person name="Brans A."/>
            <person name="Braun M."/>
            <person name="Brignell S.C."/>
            <person name="Bron S."/>
            <person name="Brouillet S."/>
            <person name="Bruschi C.V."/>
            <person name="Caldwell B."/>
            <person name="Capuano V."/>
            <person name="Carter N.M."/>
            <person name="Choi S.-K."/>
            <person name="Codani J.-J."/>
            <person name="Connerton I.F."/>
            <person name="Cummings N.J."/>
            <person name="Daniel R.A."/>
            <person name="Denizot F."/>
            <person name="Devine K.M."/>
            <person name="Duesterhoeft A."/>
            <person name="Ehrlich S.D."/>
            <person name="Emmerson P.T."/>
            <person name="Entian K.-D."/>
            <person name="Errington J."/>
            <person name="Fabret C."/>
            <person name="Ferrari E."/>
            <person name="Foulger D."/>
            <person name="Fritz C."/>
            <person name="Fujita M."/>
            <person name="Fujita Y."/>
            <person name="Fuma S."/>
            <person name="Galizzi A."/>
            <person name="Galleron N."/>
            <person name="Ghim S.-Y."/>
            <person name="Glaser P."/>
            <person name="Goffeau A."/>
            <person name="Golightly E.J."/>
            <person name="Grandi G."/>
            <person name="Guiseppi G."/>
            <person name="Guy B.J."/>
            <person name="Haga K."/>
            <person name="Haiech J."/>
            <person name="Harwood C.R."/>
            <person name="Henaut A."/>
            <person name="Hilbert H."/>
            <person name="Holsappel S."/>
            <person name="Hosono S."/>
            <person name="Hullo M.-F."/>
            <person name="Itaya M."/>
            <person name="Jones L.-M."/>
            <person name="Joris B."/>
            <person name="Karamata D."/>
            <person name="Kasahara Y."/>
            <person name="Klaerr-Blanchard M."/>
            <person name="Klein C."/>
            <person name="Kobayashi Y."/>
            <person name="Koetter P."/>
            <person name="Koningstein G."/>
            <person name="Krogh S."/>
            <person name="Kumano M."/>
            <person name="Kurita K."/>
            <person name="Lapidus A."/>
            <person name="Lardinois S."/>
            <person name="Lauber J."/>
            <person name="Lazarevic V."/>
            <person name="Lee S.-M."/>
            <person name="Levine A."/>
            <person name="Liu H."/>
            <person name="Masuda S."/>
            <person name="Mauel C."/>
            <person name="Medigue C."/>
            <person name="Medina N."/>
            <person name="Mellado R.P."/>
            <person name="Mizuno M."/>
            <person name="Moestl D."/>
            <person name="Nakai S."/>
            <person name="Noback M."/>
            <person name="Noone D."/>
            <person name="O'Reilly M."/>
            <person name="Ogawa K."/>
            <person name="Ogiwara A."/>
            <person name="Oudega B."/>
            <person name="Park S.-H."/>
            <person name="Parro V."/>
            <person name="Pohl T.M."/>
            <person name="Portetelle D."/>
            <person name="Porwollik S."/>
            <person name="Prescott A.M."/>
            <person name="Presecan E."/>
            <person name="Pujic P."/>
            <person name="Purnelle B."/>
            <person name="Rapoport G."/>
            <person name="Rey M."/>
            <person name="Reynolds S."/>
            <person name="Rieger M."/>
            <person name="Rivolta C."/>
            <person name="Rocha E."/>
            <person name="Roche B."/>
            <person name="Rose M."/>
            <person name="Sadaie Y."/>
            <person name="Sato T."/>
            <person name="Scanlan E."/>
            <person name="Schleich S."/>
            <person name="Schroeter R."/>
            <person name="Scoffone F."/>
            <person name="Sekiguchi J."/>
            <person name="Sekowska A."/>
            <person name="Seror S.J."/>
            <person name="Serror P."/>
            <person name="Shin B.-S."/>
            <person name="Soldo B."/>
            <person name="Sorokin A."/>
            <person name="Tacconi E."/>
            <person name="Takagi T."/>
            <person name="Takahashi H."/>
            <person name="Takemaru K."/>
            <person name="Takeuchi M."/>
            <person name="Tamakoshi A."/>
            <person name="Tanaka T."/>
            <person name="Terpstra P."/>
            <person name="Tognoni A."/>
            <person name="Tosato V."/>
            <person name="Uchiyama S."/>
            <person name="Vandenbol M."/>
            <person name="Vannier F."/>
            <person name="Vassarotti A."/>
            <person name="Viari A."/>
            <person name="Wambutt R."/>
            <person name="Wedler E."/>
            <person name="Wedler H."/>
            <person name="Weitzenegger T."/>
            <person name="Winters P."/>
            <person name="Wipat A."/>
            <person name="Yamamoto H."/>
            <person name="Yamane K."/>
            <person name="Yasumoto K."/>
            <person name="Yata K."/>
            <person name="Yoshida K."/>
            <person name="Yoshikawa H.-F."/>
            <person name="Zumstein E."/>
            <person name="Yoshikawa H."/>
            <person name="Danchin A."/>
        </authorList>
    </citation>
    <scope>NUCLEOTIDE SEQUENCE [LARGE SCALE GENOMIC DNA]</scope>
    <source>
        <strain>168</strain>
    </source>
</reference>
<reference key="3">
    <citation type="journal article" date="1999" name="Genome Res.">
        <title>Detecting and analyzing DNA sequencing errors: toward a higher quality of the Bacillus subtilis genome sequence.</title>
        <authorList>
            <person name="Medigue C."/>
            <person name="Rose M."/>
            <person name="Viari A."/>
            <person name="Danchin A."/>
        </authorList>
    </citation>
    <scope>SEQUENCE REVISION</scope>
</reference>
<reference key="4">
    <citation type="journal article" date="2003" name="Science">
        <title>Cannibalism by sporulating bacteria.</title>
        <authorList>
            <person name="Gonzalez-Pastor J.E."/>
            <person name="Hobbs E.C."/>
            <person name="Losick R."/>
        </authorList>
    </citation>
    <scope>FUNCTION IN SYNTHESIS OF SKFA</scope>
    <scope>INDUCTION</scope>
    <scope>DISRUPTION PHENOTYPE</scope>
    <source>
        <strain>168 / PY79</strain>
    </source>
</reference>
<reference key="5">
    <citation type="journal article" date="2007" name="J. Bacteriol.">
        <title>Abh and AbrB control of Bacillus subtilis antimicrobial gene expression.</title>
        <authorList>
            <person name="Strauch M.A."/>
            <person name="Bobay B.G."/>
            <person name="Cavanagh J."/>
            <person name="Yao F."/>
            <person name="Wilson A."/>
            <person name="Le Breton Y."/>
        </authorList>
    </citation>
    <scope>REPRESSION BY ABRB AND ABH</scope>
</reference>
<reference key="6">
    <citation type="journal article" date="2013" name="J. Am. Chem. Soc.">
        <title>Two [4Fe-4S] clusters containing radical SAM enzyme SkfB catalyze thioether bond formation during the maturation of the sporulation killing factor.</title>
        <authorList>
            <person name="Fluehe L."/>
            <person name="Burghaus O."/>
            <person name="Wieckowski B.M."/>
            <person name="Giessen T.W."/>
            <person name="Linne U."/>
            <person name="Marahiel M.A."/>
        </authorList>
    </citation>
    <scope>FUNCTION</scope>
    <scope>SUBSTRATE SPECIFICITY</scope>
    <scope>COFACTOR</scope>
    <scope>MUTAGENESIS OF 117-CYS--CYS-124 AND 380-CYS--CYS-387</scope>
    <source>
        <strain>168</strain>
    </source>
</reference>
<organism>
    <name type="scientific">Bacillus subtilis (strain 168)</name>
    <dbReference type="NCBI Taxonomy" id="224308"/>
    <lineage>
        <taxon>Bacteria</taxon>
        <taxon>Bacillati</taxon>
        <taxon>Bacillota</taxon>
        <taxon>Bacilli</taxon>
        <taxon>Bacillales</taxon>
        <taxon>Bacillaceae</taxon>
        <taxon>Bacillus</taxon>
    </lineage>
</organism>
<name>SKFB_BACSU</name>
<protein>
    <recommendedName>
        <fullName>Sporulation killing factor maturation protein SkfB</fullName>
        <ecNumber evidence="7">1.21.98.-</ecNumber>
    </recommendedName>
</protein>